<sequence length="368" mass="41446">MAPSTLTALAQEKTLNSKFVRDEDERPKIAYNKFSDEIPVISLAGIDDDSVDKRSQICRKIVEACEDWGIFQVVDHGIDIDLISEMTRLARQFFALPAEEKLRFDMTGGKKGGFIVSSHLQGEAVQDWREIVTYFSYPIQARDYSRWPDKPEGWRSITEMYSDELMALACKLLEVLSEAMGLEKEGLTKACVDMDQKVIVNYYPKCPQPNLTLGLKRHTDPGTITLLLQDQVGGLQATRDGGKTWITVQPVEGAFVVNLGDHGHYLSNGRFKNADHQAVVNSNSSRMSIATFQNPAPNATVYPLKIREGEKAVMEEPITFAEMYKRKMSRDIEMATLKKLAKEKVLQDQEVEKAKLQMTPKSADEIFA</sequence>
<proteinExistence type="evidence at protein level"/>
<keyword id="KW-0223">Dioxygenase</keyword>
<keyword id="KW-0284">Flavonoid biosynthesis</keyword>
<keyword id="KW-0408">Iron</keyword>
<keyword id="KW-0479">Metal-binding</keyword>
<keyword id="KW-0560">Oxidoreductase</keyword>
<keyword id="KW-0847">Vitamin C</keyword>
<gene>
    <name type="primary">FHT</name>
</gene>
<comment type="function">
    <text>Involved in the conversion of (2S)-naringenin to (+)-(2R/3R)-dihydrokaempferol.</text>
</comment>
<comment type="catalytic activity">
    <reaction evidence="3">
        <text>a (2S)-flavan-4-one + 2-oxoglutarate + O2 = a (2R,3R)-dihydroflavonol + succinate + CO2</text>
        <dbReference type="Rhea" id="RHEA:18621"/>
        <dbReference type="ChEBI" id="CHEBI:15379"/>
        <dbReference type="ChEBI" id="CHEBI:16526"/>
        <dbReference type="ChEBI" id="CHEBI:16810"/>
        <dbReference type="ChEBI" id="CHEBI:30031"/>
        <dbReference type="ChEBI" id="CHEBI:138188"/>
        <dbReference type="ChEBI" id="CHEBI:140377"/>
        <dbReference type="EC" id="1.14.11.9"/>
    </reaction>
</comment>
<comment type="cofactor">
    <cofactor evidence="2">
        <name>Fe(2+)</name>
        <dbReference type="ChEBI" id="CHEBI:29033"/>
    </cofactor>
    <text evidence="2">Binds 1 Fe(2+) ion per subunit.</text>
</comment>
<comment type="cofactor">
    <cofactor evidence="1">
        <name>L-ascorbate</name>
        <dbReference type="ChEBI" id="CHEBI:38290"/>
    </cofactor>
</comment>
<comment type="pathway">
    <text>Secondary metabolite biosynthesis; flavonoid biosynthesis.</text>
</comment>
<comment type="similarity">
    <text evidence="4">Belongs to the iron/ascorbate-dependent oxidoreductase family.</text>
</comment>
<reference key="1">
    <citation type="journal article" date="2003" name="FEBS Lett.">
        <title>Divergent evolution of flavonoid 2-oxoglutarate-dependent dioxygenases in parsley.</title>
        <authorList>
            <person name="Martens S."/>
            <person name="Forkmann G."/>
            <person name="Britsch L."/>
            <person name="Wellmann F."/>
            <person name="Matern U."/>
            <person name="Lukacin R."/>
        </authorList>
    </citation>
    <scope>NUCLEOTIDE SEQUENCE [MRNA]</scope>
    <scope>CATALYTIC ACTIVITY</scope>
    <source>
        <strain>cv. Italian Giant</strain>
    </source>
</reference>
<organism>
    <name type="scientific">Petroselinum crispum</name>
    <name type="common">Parsley</name>
    <name type="synonym">Petroselinum hortense</name>
    <dbReference type="NCBI Taxonomy" id="4043"/>
    <lineage>
        <taxon>Eukaryota</taxon>
        <taxon>Viridiplantae</taxon>
        <taxon>Streptophyta</taxon>
        <taxon>Embryophyta</taxon>
        <taxon>Tracheophyta</taxon>
        <taxon>Spermatophyta</taxon>
        <taxon>Magnoliopsida</taxon>
        <taxon>eudicotyledons</taxon>
        <taxon>Gunneridae</taxon>
        <taxon>Pentapetalae</taxon>
        <taxon>asterids</taxon>
        <taxon>campanulids</taxon>
        <taxon>Apiales</taxon>
        <taxon>Apiaceae</taxon>
        <taxon>Apioideae</taxon>
        <taxon>apioid superclade</taxon>
        <taxon>Apieae</taxon>
        <taxon>Petroselinum</taxon>
    </lineage>
</organism>
<feature type="chain" id="PRO_0000386541" description="Flavanone 3-dioxygenase">
    <location>
        <begin position="1"/>
        <end position="368"/>
    </location>
</feature>
<feature type="domain" description="Fe2OG dioxygenase" evidence="2">
    <location>
        <begin position="191"/>
        <end position="295"/>
    </location>
</feature>
<feature type="binding site" evidence="2">
    <location>
        <position position="218"/>
    </location>
    <ligand>
        <name>Fe cation</name>
        <dbReference type="ChEBI" id="CHEBI:24875"/>
    </ligand>
</feature>
<feature type="binding site" evidence="2">
    <location>
        <position position="220"/>
    </location>
    <ligand>
        <name>Fe cation</name>
        <dbReference type="ChEBI" id="CHEBI:24875"/>
    </ligand>
</feature>
<feature type="binding site" evidence="2">
    <location>
        <position position="276"/>
    </location>
    <ligand>
        <name>Fe cation</name>
        <dbReference type="ChEBI" id="CHEBI:24875"/>
    </ligand>
</feature>
<feature type="binding site" evidence="2">
    <location>
        <position position="286"/>
    </location>
    <ligand>
        <name>2-oxoglutarate</name>
        <dbReference type="ChEBI" id="CHEBI:16810"/>
    </ligand>
</feature>
<accession>Q7XZQ7</accession>
<protein>
    <recommendedName>
        <fullName>Flavanone 3-dioxygenase</fullName>
        <ecNumber evidence="3">1.14.11.9</ecNumber>
    </recommendedName>
    <alternativeName>
        <fullName>Flavanone 3-beta-hydroxylase</fullName>
    </alternativeName>
    <alternativeName>
        <fullName>Flavanone 3-hydroxylase</fullName>
        <shortName>F3H</shortName>
    </alternativeName>
    <alternativeName>
        <fullName>Naringenin,2-oxoglutarate 3-dioxygenase</fullName>
        <shortName>Naringenin 3-dioxygenase</shortName>
    </alternativeName>
</protein>
<evidence type="ECO:0000250" key="1"/>
<evidence type="ECO:0000255" key="2">
    <source>
        <dbReference type="PROSITE-ProRule" id="PRU00805"/>
    </source>
</evidence>
<evidence type="ECO:0000269" key="3">
    <source>
    </source>
</evidence>
<evidence type="ECO:0000305" key="4"/>
<dbReference type="EC" id="1.14.11.9" evidence="3"/>
<dbReference type="EMBL" id="AY230248">
    <property type="protein sequence ID" value="AAP57394.1"/>
    <property type="molecule type" value="mRNA"/>
</dbReference>
<dbReference type="SMR" id="Q7XZQ7"/>
<dbReference type="BRENDA" id="1.14.11.9">
    <property type="organism ID" value="4694"/>
</dbReference>
<dbReference type="UniPathway" id="UPA00154"/>
<dbReference type="GO" id="GO:0045486">
    <property type="term" value="F:flavanone 3-dioxygenase activity"/>
    <property type="evidence" value="ECO:0007669"/>
    <property type="project" value="UniProtKB-EC"/>
</dbReference>
<dbReference type="GO" id="GO:0031418">
    <property type="term" value="F:L-ascorbic acid binding"/>
    <property type="evidence" value="ECO:0007669"/>
    <property type="project" value="UniProtKB-KW"/>
</dbReference>
<dbReference type="GO" id="GO:0046872">
    <property type="term" value="F:metal ion binding"/>
    <property type="evidence" value="ECO:0007669"/>
    <property type="project" value="UniProtKB-KW"/>
</dbReference>
<dbReference type="GO" id="GO:0009813">
    <property type="term" value="P:flavonoid biosynthetic process"/>
    <property type="evidence" value="ECO:0007669"/>
    <property type="project" value="UniProtKB-UniPathway"/>
</dbReference>
<dbReference type="FunFam" id="2.60.120.330:FF:000016">
    <property type="entry name" value="Naringenin,2-oxoglutarate 3-dioxygenase"/>
    <property type="match status" value="1"/>
</dbReference>
<dbReference type="Gene3D" id="2.60.120.330">
    <property type="entry name" value="B-lactam Antibiotic, Isopenicillin N Synthase, Chain"/>
    <property type="match status" value="1"/>
</dbReference>
<dbReference type="InterPro" id="IPR026992">
    <property type="entry name" value="DIOX_N"/>
</dbReference>
<dbReference type="InterPro" id="IPR044861">
    <property type="entry name" value="IPNS-like_FE2OG_OXY"/>
</dbReference>
<dbReference type="InterPro" id="IPR027443">
    <property type="entry name" value="IPNS-like_sf"/>
</dbReference>
<dbReference type="InterPro" id="IPR005123">
    <property type="entry name" value="Oxoglu/Fe-dep_dioxygenase_dom"/>
</dbReference>
<dbReference type="InterPro" id="IPR050295">
    <property type="entry name" value="Plant_2OG-oxidoreductases"/>
</dbReference>
<dbReference type="PANTHER" id="PTHR47991">
    <property type="entry name" value="OXOGLUTARATE/IRON-DEPENDENT DIOXYGENASE"/>
    <property type="match status" value="1"/>
</dbReference>
<dbReference type="Pfam" id="PF03171">
    <property type="entry name" value="2OG-FeII_Oxy"/>
    <property type="match status" value="1"/>
</dbReference>
<dbReference type="Pfam" id="PF14226">
    <property type="entry name" value="DIOX_N"/>
    <property type="match status" value="1"/>
</dbReference>
<dbReference type="SUPFAM" id="SSF51197">
    <property type="entry name" value="Clavaminate synthase-like"/>
    <property type="match status" value="1"/>
</dbReference>
<dbReference type="PROSITE" id="PS51471">
    <property type="entry name" value="FE2OG_OXY"/>
    <property type="match status" value="1"/>
</dbReference>
<name>FL3H_PETCR</name>